<proteinExistence type="inferred from homology"/>
<reference key="1">
    <citation type="submission" date="2008-06" db="EMBL/GenBank/DDBJ databases">
        <title>Complete sequence of Chlorobium phaeobacteroides BS1.</title>
        <authorList>
            <consortium name="US DOE Joint Genome Institute"/>
            <person name="Lucas S."/>
            <person name="Copeland A."/>
            <person name="Lapidus A."/>
            <person name="Glavina del Rio T."/>
            <person name="Dalin E."/>
            <person name="Tice H."/>
            <person name="Bruce D."/>
            <person name="Goodwin L."/>
            <person name="Pitluck S."/>
            <person name="Schmutz J."/>
            <person name="Larimer F."/>
            <person name="Land M."/>
            <person name="Hauser L."/>
            <person name="Kyrpides N."/>
            <person name="Ovchinnikova G."/>
            <person name="Li T."/>
            <person name="Liu Z."/>
            <person name="Zhao F."/>
            <person name="Overmann J."/>
            <person name="Bryant D.A."/>
            <person name="Richardson P."/>
        </authorList>
    </citation>
    <scope>NUCLEOTIDE SEQUENCE [LARGE SCALE GENOMIC DNA]</scope>
    <source>
        <strain>BS1</strain>
    </source>
</reference>
<gene>
    <name evidence="1" type="primary">lspA</name>
    <name type="ordered locus">Cphamn1_1775</name>
</gene>
<protein>
    <recommendedName>
        <fullName evidence="1">Lipoprotein signal peptidase</fullName>
        <ecNumber evidence="1">3.4.23.36</ecNumber>
    </recommendedName>
    <alternativeName>
        <fullName evidence="1">Prolipoprotein signal peptidase</fullName>
    </alternativeName>
    <alternativeName>
        <fullName evidence="1">Signal peptidase II</fullName>
        <shortName evidence="1">SPase II</shortName>
    </alternativeName>
</protein>
<comment type="function">
    <text evidence="1">This protein specifically catalyzes the removal of signal peptides from prolipoproteins.</text>
</comment>
<comment type="catalytic activity">
    <reaction evidence="1">
        <text>Release of signal peptides from bacterial membrane prolipoproteins. Hydrolyzes -Xaa-Yaa-Zaa-|-(S,diacylglyceryl)Cys-, in which Xaa is hydrophobic (preferably Leu), and Yaa (Ala or Ser) and Zaa (Gly or Ala) have small, neutral side chains.</text>
        <dbReference type="EC" id="3.4.23.36"/>
    </reaction>
</comment>
<comment type="pathway">
    <text evidence="1">Protein modification; lipoprotein biosynthesis (signal peptide cleavage).</text>
</comment>
<comment type="subcellular location">
    <subcellularLocation>
        <location evidence="1">Cell inner membrane</location>
        <topology evidence="1">Multi-pass membrane protein</topology>
    </subcellularLocation>
</comment>
<comment type="similarity">
    <text evidence="1">Belongs to the peptidase A8 family.</text>
</comment>
<keyword id="KW-0064">Aspartyl protease</keyword>
<keyword id="KW-0997">Cell inner membrane</keyword>
<keyword id="KW-1003">Cell membrane</keyword>
<keyword id="KW-0378">Hydrolase</keyword>
<keyword id="KW-0472">Membrane</keyword>
<keyword id="KW-0645">Protease</keyword>
<keyword id="KW-0812">Transmembrane</keyword>
<keyword id="KW-1133">Transmembrane helix</keyword>
<feature type="chain" id="PRO_1000097248" description="Lipoprotein signal peptidase">
    <location>
        <begin position="1"/>
        <end position="159"/>
    </location>
</feature>
<feature type="transmembrane region" description="Helical" evidence="1">
    <location>
        <begin position="59"/>
        <end position="79"/>
    </location>
</feature>
<feature type="transmembrane region" description="Helical" evidence="1">
    <location>
        <begin position="87"/>
        <end position="107"/>
    </location>
</feature>
<feature type="transmembrane region" description="Helical" evidence="1">
    <location>
        <begin position="131"/>
        <end position="151"/>
    </location>
</feature>
<feature type="active site" evidence="1">
    <location>
        <position position="113"/>
    </location>
</feature>
<feature type="active site" evidence="1">
    <location>
        <position position="139"/>
    </location>
</feature>
<name>LSPA_CHLPB</name>
<evidence type="ECO:0000255" key="1">
    <source>
        <dbReference type="HAMAP-Rule" id="MF_00161"/>
    </source>
</evidence>
<dbReference type="EC" id="3.4.23.36" evidence="1"/>
<dbReference type="EMBL" id="CP001101">
    <property type="protein sequence ID" value="ACE04693.1"/>
    <property type="molecule type" value="Genomic_DNA"/>
</dbReference>
<dbReference type="SMR" id="B3ELA5"/>
<dbReference type="STRING" id="331678.Cphamn1_1775"/>
<dbReference type="KEGG" id="cpb:Cphamn1_1775"/>
<dbReference type="eggNOG" id="COG0597">
    <property type="taxonomic scope" value="Bacteria"/>
</dbReference>
<dbReference type="HOGENOM" id="CLU_083252_3_4_10"/>
<dbReference type="OrthoDB" id="9810259at2"/>
<dbReference type="UniPathway" id="UPA00665"/>
<dbReference type="GO" id="GO:0005886">
    <property type="term" value="C:plasma membrane"/>
    <property type="evidence" value="ECO:0007669"/>
    <property type="project" value="UniProtKB-SubCell"/>
</dbReference>
<dbReference type="GO" id="GO:0004190">
    <property type="term" value="F:aspartic-type endopeptidase activity"/>
    <property type="evidence" value="ECO:0007669"/>
    <property type="project" value="UniProtKB-UniRule"/>
</dbReference>
<dbReference type="GO" id="GO:0006508">
    <property type="term" value="P:proteolysis"/>
    <property type="evidence" value="ECO:0007669"/>
    <property type="project" value="UniProtKB-KW"/>
</dbReference>
<dbReference type="HAMAP" id="MF_00161">
    <property type="entry name" value="LspA"/>
    <property type="match status" value="1"/>
</dbReference>
<dbReference type="InterPro" id="IPR001872">
    <property type="entry name" value="Peptidase_A8"/>
</dbReference>
<dbReference type="NCBIfam" id="TIGR00077">
    <property type="entry name" value="lspA"/>
    <property type="match status" value="1"/>
</dbReference>
<dbReference type="NCBIfam" id="NF011368">
    <property type="entry name" value="PRK14787.1"/>
    <property type="match status" value="1"/>
</dbReference>
<dbReference type="PANTHER" id="PTHR33695">
    <property type="entry name" value="LIPOPROTEIN SIGNAL PEPTIDASE"/>
    <property type="match status" value="1"/>
</dbReference>
<dbReference type="PANTHER" id="PTHR33695:SF1">
    <property type="entry name" value="LIPOPROTEIN SIGNAL PEPTIDASE"/>
    <property type="match status" value="1"/>
</dbReference>
<dbReference type="Pfam" id="PF01252">
    <property type="entry name" value="Peptidase_A8"/>
    <property type="match status" value="1"/>
</dbReference>
<dbReference type="PRINTS" id="PR00781">
    <property type="entry name" value="LIPOSIGPTASE"/>
</dbReference>
<dbReference type="PROSITE" id="PS00855">
    <property type="entry name" value="SPASE_II"/>
    <property type="match status" value="1"/>
</dbReference>
<sequence length="159" mass="17669">MQLFFLCAALVIVLDQFTKQLAITHLMPNEESLVLIAEWLKLTYTENTGIAFGLSLGSPMILIVSTTLILAALFLYVVFSKNRNPGFLITFGLILGGGIGNGIDRILSGRVVDFIHVDIYQGYLFGSWVSLWPVFNIADSAITIGACVLVIWYNRFFTR</sequence>
<organism>
    <name type="scientific">Chlorobium phaeobacteroides (strain BS1)</name>
    <dbReference type="NCBI Taxonomy" id="331678"/>
    <lineage>
        <taxon>Bacteria</taxon>
        <taxon>Pseudomonadati</taxon>
        <taxon>Chlorobiota</taxon>
        <taxon>Chlorobiia</taxon>
        <taxon>Chlorobiales</taxon>
        <taxon>Chlorobiaceae</taxon>
        <taxon>Chlorobium/Pelodictyon group</taxon>
        <taxon>Chlorobium</taxon>
    </lineage>
</organism>
<accession>B3ELA5</accession>